<keyword id="KW-0238">DNA-binding</keyword>
<keyword id="KW-1048">Host nucleus</keyword>
<keyword id="KW-0597">Phosphoprotein</keyword>
<keyword id="KW-0804">Transcription</keyword>
<keyword id="KW-0805">Transcription regulation</keyword>
<keyword id="KW-0946">Virion</keyword>
<keyword id="KW-0920">Virion tegument</keyword>
<reference key="1">
    <citation type="journal article" date="1991" name="J. Virol.">
        <title>Sequence, function, and regulation of the Vmw65 gene of herpes simplex virus type 2.</title>
        <authorList>
            <person name="Greaves R.F."/>
            <person name="O'Hare P."/>
        </authorList>
    </citation>
    <scope>NUCLEOTIDE SEQUENCE [GENOMIC DNA]</scope>
</reference>
<sequence length="490" mass="54621">MDLLVDDLFADADGVSPPPPRPAGGPKNTPAAPPLYATGRLSQAQLMPSPPMPVPPAALFNRLLDDLGFSAGPALCTMLDTWNEDLFSGFPTNADMYRECKFLSTLPSDVIDWGDAHVPERSPIDIRAHGDVAFPTLPATRDELPSYYEAMAQFFRGELRAREESYRTVLANFCSALYRYLRASVRQLHRQAHMRGRNRDLREMLRTTIADRYYRETARLARVLFLHLYLFLSREILWAAYAEQMMRPDLFDGLCCDLESWRQLACLFQPLMFINGSLTVRGVPVEARRLRELNHIREHLNLPLVRSAAAEEPGAPLTTPPVLQGNQARSSGYFMLLIRAKLDSYSSVATSEGESVMREHAYSRGRTRNNYGSTIEGLLDLPDDDDAPAEAGLVAPRMSFLSAGQRPRRLSTTAPITDVSLGDELRLDGEEVDMTPADALDDFDLEMLGDVESPSPGMTHDPVSYGALDVDDFEFEQMFTDAMGIDDFGG</sequence>
<feature type="chain" id="PRO_0000115800" description="Tegument protein VP16">
    <location>
        <begin position="1"/>
        <end position="490"/>
    </location>
</feature>
<feature type="region of interest" description="Disordered" evidence="3">
    <location>
        <begin position="11"/>
        <end position="35"/>
    </location>
</feature>
<feature type="region of interest" description="Transcriptional activation" evidence="1">
    <location>
        <begin position="411"/>
        <end position="490"/>
    </location>
</feature>
<feature type="site" description="Critical role in activation" evidence="1">
    <location>
        <position position="443"/>
    </location>
</feature>
<feature type="modified residue" description="Phosphoserine" evidence="1">
    <location>
        <position position="16"/>
    </location>
</feature>
<feature type="modified residue" description="Phosphoserine" evidence="1">
    <location>
        <position position="351"/>
    </location>
</feature>
<feature type="modified residue" description="Phosphoserine" evidence="1">
    <location>
        <position position="411"/>
    </location>
</feature>
<feature type="modified residue" description="Phosphoserine" evidence="1">
    <location>
        <position position="453"/>
    </location>
</feature>
<accession>P68335</accession>
<accession>P23990</accession>
<accession>P29793</accession>
<organism>
    <name type="scientific">Human herpesvirus 2 (strain 333)</name>
    <name type="common">HHV-2</name>
    <name type="synonym">Human herpes simplex virus 2</name>
    <dbReference type="NCBI Taxonomy" id="10313"/>
    <lineage>
        <taxon>Viruses</taxon>
        <taxon>Duplodnaviria</taxon>
        <taxon>Heunggongvirae</taxon>
        <taxon>Peploviricota</taxon>
        <taxon>Herviviricetes</taxon>
        <taxon>Herpesvirales</taxon>
        <taxon>Orthoherpesviridae</taxon>
        <taxon>Alphaherpesvirinae</taxon>
        <taxon>Simplexvirus</taxon>
        <taxon>Simplexvirus humanalpha2</taxon>
        <taxon>Human herpesvirus 2</taxon>
    </lineage>
</organism>
<organismHost>
    <name type="scientific">Homo sapiens</name>
    <name type="common">Human</name>
    <dbReference type="NCBI Taxonomy" id="9606"/>
</organismHost>
<gene>
    <name type="ORF">UL48</name>
</gene>
<evidence type="ECO:0000250" key="1"/>
<evidence type="ECO:0000250" key="2">
    <source>
        <dbReference type="UniProtKB" id="P04486"/>
    </source>
</evidence>
<evidence type="ECO:0000256" key="3">
    <source>
        <dbReference type="SAM" id="MobiDB-lite"/>
    </source>
</evidence>
<evidence type="ECO:0000305" key="4"/>
<name>VP16_HHV23</name>
<dbReference type="EMBL" id="M75098">
    <property type="protein sequence ID" value="AAA45862.1"/>
    <property type="molecule type" value="Genomic_DNA"/>
</dbReference>
<dbReference type="PIR" id="A41562">
    <property type="entry name" value="IXBE33"/>
</dbReference>
<dbReference type="RefSeq" id="YP_009137200.1">
    <property type="nucleotide sequence ID" value="NC_001798.2"/>
</dbReference>
<dbReference type="SMR" id="P68335"/>
<dbReference type="BioGRID" id="1677940">
    <property type="interactions" value="1"/>
</dbReference>
<dbReference type="DNASU" id="1487335"/>
<dbReference type="GeneID" id="1487335"/>
<dbReference type="KEGG" id="vg:1487335"/>
<dbReference type="GO" id="GO:0042025">
    <property type="term" value="C:host cell nucleus"/>
    <property type="evidence" value="ECO:0007669"/>
    <property type="project" value="UniProtKB-SubCell"/>
</dbReference>
<dbReference type="GO" id="GO:0019033">
    <property type="term" value="C:viral tegument"/>
    <property type="evidence" value="ECO:0007669"/>
    <property type="project" value="UniProtKB-SubCell"/>
</dbReference>
<dbReference type="GO" id="GO:0003677">
    <property type="term" value="F:DNA binding"/>
    <property type="evidence" value="ECO:0007669"/>
    <property type="project" value="UniProtKB-KW"/>
</dbReference>
<dbReference type="GO" id="GO:0039695">
    <property type="term" value="P:DNA-templated viral transcription"/>
    <property type="evidence" value="ECO:0000250"/>
    <property type="project" value="UniProtKB"/>
</dbReference>
<dbReference type="GO" id="GO:0006355">
    <property type="term" value="P:regulation of DNA-templated transcription"/>
    <property type="evidence" value="ECO:0007669"/>
    <property type="project" value="InterPro"/>
</dbReference>
<dbReference type="FunFam" id="1.10.1290.10:FF:000001">
    <property type="entry name" value="Tegument protein VP16"/>
    <property type="match status" value="1"/>
</dbReference>
<dbReference type="Gene3D" id="1.10.1290.10">
    <property type="entry name" value="Alpha trans-inducing (Alpha-TIF)"/>
    <property type="match status" value="1"/>
</dbReference>
<dbReference type="InterPro" id="IPR003174">
    <property type="entry name" value="Alpha_TIF"/>
</dbReference>
<dbReference type="InterPro" id="IPR036538">
    <property type="entry name" value="Alpha_TIF_sf"/>
</dbReference>
<dbReference type="InterPro" id="IPR021051">
    <property type="entry name" value="HSV_VP16_C"/>
</dbReference>
<dbReference type="Pfam" id="PF02232">
    <property type="entry name" value="Alpha_TIF"/>
    <property type="match status" value="1"/>
</dbReference>
<dbReference type="Pfam" id="PF12149">
    <property type="entry name" value="HSV_VP16_C"/>
    <property type="match status" value="1"/>
</dbReference>
<dbReference type="SMART" id="SM00814">
    <property type="entry name" value="Alpha_TIF"/>
    <property type="match status" value="1"/>
</dbReference>
<dbReference type="SUPFAM" id="SSF56548">
    <property type="entry name" value="Conserved core of transcriptional regulatory protein vp16"/>
    <property type="match status" value="1"/>
</dbReference>
<comment type="function">
    <text evidence="1">Transcriptional activator of immediate-early (IE) gene products (alpha genes). Acts as a key activator of lytic infection by initiating the lytic program through the assembly of the transcriptional regulatory VP16-induced complex composed of VP16 and two cellular factors, HCFC1 and POU2F 1. VP16-induced complex represents a regulatory switch: when it is on, it promotes IE-gene expression and thus lytic infection, and when it is off, it limits IE-gene transcription favoring latent infection (By similarity).</text>
</comment>
<comment type="function">
    <text evidence="4">May play a role in the aggregation of tegument proteins around nucleocapsids during virus morphogenesis.</text>
</comment>
<comment type="subunit">
    <text evidence="1">Interacts with VP22. Interacts with gH (via C-terminus). Interacts with the virion host shutoff protein (vhs). Interacts with VP11/12. Associates with the VP16-induced complex; binding to host HCFC1 activates VP16 for association with the octamer motif-binding host protein POU2F1, to form a multiprotein-DNA complex responsible for activating transcription of the viral immediate early genes (By similarity).</text>
</comment>
<comment type="subcellular location">
    <subcellularLocation>
        <location evidence="2">Virion tegument</location>
    </subcellularLocation>
    <subcellularLocation>
        <location evidence="2">Host nucleus</location>
    </subcellularLocation>
</comment>
<comment type="domain">
    <text evidence="1">The transcriptional activation region seems to target many proteins of the RNA polymerase II transcription machinery.</text>
</comment>
<comment type="similarity">
    <text evidence="4">Belongs to the herpesviridae tegument protein VP16 protein family.</text>
</comment>
<proteinExistence type="inferred from homology"/>
<protein>
    <recommendedName>
        <fullName>Tegument protein VP16</fullName>
    </recommendedName>
    <alternativeName>
        <fullName>Alpha trans-inducing protein</fullName>
    </alternativeName>
    <alternativeName>
        <fullName>Alpha-TIF</fullName>
    </alternativeName>
    <alternativeName>
        <fullName>ICP25</fullName>
    </alternativeName>
    <alternativeName>
        <fullName>Vmw65</fullName>
    </alternativeName>
</protein>